<sequence>MRAYEVVYVLTPDLEEEQVEEKHNEFKSVIERYGGAPGEIDVWGKRRLAYEIDDYQEGIYALRKFQGENQVLTELERSLKMDESILRYLIARDEDA</sequence>
<reference key="1">
    <citation type="submission" date="2008-04" db="EMBL/GenBank/DDBJ databases">
        <title>Complete sequence of chromosome of Natranaerobius thermophilus JW/NM-WN-LF.</title>
        <authorList>
            <consortium name="US DOE Joint Genome Institute"/>
            <person name="Copeland A."/>
            <person name="Lucas S."/>
            <person name="Lapidus A."/>
            <person name="Glavina del Rio T."/>
            <person name="Dalin E."/>
            <person name="Tice H."/>
            <person name="Bruce D."/>
            <person name="Goodwin L."/>
            <person name="Pitluck S."/>
            <person name="Chertkov O."/>
            <person name="Brettin T."/>
            <person name="Detter J.C."/>
            <person name="Han C."/>
            <person name="Kuske C.R."/>
            <person name="Schmutz J."/>
            <person name="Larimer F."/>
            <person name="Land M."/>
            <person name="Hauser L."/>
            <person name="Kyrpides N."/>
            <person name="Lykidis A."/>
            <person name="Mesbah N.M."/>
            <person name="Wiegel J."/>
        </authorList>
    </citation>
    <scope>NUCLEOTIDE SEQUENCE [LARGE SCALE GENOMIC DNA]</scope>
    <source>
        <strain>ATCC BAA-1301 / DSM 18059 / JW/NM-WN-LF</strain>
    </source>
</reference>
<gene>
    <name evidence="1" type="primary">rpsF</name>
    <name type="ordered locus">Nther_2916</name>
</gene>
<keyword id="KW-1185">Reference proteome</keyword>
<keyword id="KW-0687">Ribonucleoprotein</keyword>
<keyword id="KW-0689">Ribosomal protein</keyword>
<keyword id="KW-0694">RNA-binding</keyword>
<keyword id="KW-0699">rRNA-binding</keyword>
<accession>B2A456</accession>
<evidence type="ECO:0000255" key="1">
    <source>
        <dbReference type="HAMAP-Rule" id="MF_00360"/>
    </source>
</evidence>
<evidence type="ECO:0000305" key="2"/>
<comment type="function">
    <text evidence="1">Binds together with bS18 to 16S ribosomal RNA.</text>
</comment>
<comment type="similarity">
    <text evidence="1">Belongs to the bacterial ribosomal protein bS6 family.</text>
</comment>
<organism>
    <name type="scientific">Natranaerobius thermophilus (strain ATCC BAA-1301 / DSM 18059 / JW/NM-WN-LF)</name>
    <dbReference type="NCBI Taxonomy" id="457570"/>
    <lineage>
        <taxon>Bacteria</taxon>
        <taxon>Bacillati</taxon>
        <taxon>Bacillota</taxon>
        <taxon>Clostridia</taxon>
        <taxon>Natranaerobiales</taxon>
        <taxon>Natranaerobiaceae</taxon>
        <taxon>Natranaerobius</taxon>
    </lineage>
</organism>
<name>RS6_NATTJ</name>
<protein>
    <recommendedName>
        <fullName evidence="1">Small ribosomal subunit protein bS6</fullName>
    </recommendedName>
    <alternativeName>
        <fullName evidence="2">30S ribosomal protein S6</fullName>
    </alternativeName>
</protein>
<feature type="chain" id="PRO_1000120779" description="Small ribosomal subunit protein bS6">
    <location>
        <begin position="1"/>
        <end position="96"/>
    </location>
</feature>
<dbReference type="EMBL" id="CP001034">
    <property type="protein sequence ID" value="ACB86462.1"/>
    <property type="molecule type" value="Genomic_DNA"/>
</dbReference>
<dbReference type="RefSeq" id="WP_012449294.1">
    <property type="nucleotide sequence ID" value="NC_010718.1"/>
</dbReference>
<dbReference type="SMR" id="B2A456"/>
<dbReference type="FunCoup" id="B2A456">
    <property type="interactions" value="375"/>
</dbReference>
<dbReference type="STRING" id="457570.Nther_2916"/>
<dbReference type="KEGG" id="nth:Nther_2916"/>
<dbReference type="eggNOG" id="COG0360">
    <property type="taxonomic scope" value="Bacteria"/>
</dbReference>
<dbReference type="HOGENOM" id="CLU_113441_5_1_9"/>
<dbReference type="InParanoid" id="B2A456"/>
<dbReference type="OrthoDB" id="9812702at2"/>
<dbReference type="Proteomes" id="UP000001683">
    <property type="component" value="Chromosome"/>
</dbReference>
<dbReference type="GO" id="GO:0005737">
    <property type="term" value="C:cytoplasm"/>
    <property type="evidence" value="ECO:0007669"/>
    <property type="project" value="UniProtKB-ARBA"/>
</dbReference>
<dbReference type="GO" id="GO:1990904">
    <property type="term" value="C:ribonucleoprotein complex"/>
    <property type="evidence" value="ECO:0007669"/>
    <property type="project" value="UniProtKB-KW"/>
</dbReference>
<dbReference type="GO" id="GO:0005840">
    <property type="term" value="C:ribosome"/>
    <property type="evidence" value="ECO:0007669"/>
    <property type="project" value="UniProtKB-KW"/>
</dbReference>
<dbReference type="GO" id="GO:0070181">
    <property type="term" value="F:small ribosomal subunit rRNA binding"/>
    <property type="evidence" value="ECO:0007669"/>
    <property type="project" value="TreeGrafter"/>
</dbReference>
<dbReference type="GO" id="GO:0003735">
    <property type="term" value="F:structural constituent of ribosome"/>
    <property type="evidence" value="ECO:0007669"/>
    <property type="project" value="InterPro"/>
</dbReference>
<dbReference type="GO" id="GO:0006412">
    <property type="term" value="P:translation"/>
    <property type="evidence" value="ECO:0007669"/>
    <property type="project" value="UniProtKB-UniRule"/>
</dbReference>
<dbReference type="CDD" id="cd00473">
    <property type="entry name" value="bS6"/>
    <property type="match status" value="1"/>
</dbReference>
<dbReference type="Gene3D" id="3.30.70.60">
    <property type="match status" value="1"/>
</dbReference>
<dbReference type="HAMAP" id="MF_00360">
    <property type="entry name" value="Ribosomal_bS6"/>
    <property type="match status" value="1"/>
</dbReference>
<dbReference type="InterPro" id="IPR000529">
    <property type="entry name" value="Ribosomal_bS6"/>
</dbReference>
<dbReference type="InterPro" id="IPR035980">
    <property type="entry name" value="Ribosomal_bS6_sf"/>
</dbReference>
<dbReference type="InterPro" id="IPR020814">
    <property type="entry name" value="Ribosomal_S6_plastid/chlpt"/>
</dbReference>
<dbReference type="InterPro" id="IPR014717">
    <property type="entry name" value="Transl_elong_EF1B/ribsomal_bS6"/>
</dbReference>
<dbReference type="NCBIfam" id="TIGR00166">
    <property type="entry name" value="S6"/>
    <property type="match status" value="1"/>
</dbReference>
<dbReference type="PANTHER" id="PTHR21011">
    <property type="entry name" value="MITOCHONDRIAL 28S RIBOSOMAL PROTEIN S6"/>
    <property type="match status" value="1"/>
</dbReference>
<dbReference type="PANTHER" id="PTHR21011:SF1">
    <property type="entry name" value="SMALL RIBOSOMAL SUBUNIT PROTEIN BS6M"/>
    <property type="match status" value="1"/>
</dbReference>
<dbReference type="Pfam" id="PF01250">
    <property type="entry name" value="Ribosomal_S6"/>
    <property type="match status" value="1"/>
</dbReference>
<dbReference type="SUPFAM" id="SSF54995">
    <property type="entry name" value="Ribosomal protein S6"/>
    <property type="match status" value="1"/>
</dbReference>
<proteinExistence type="inferred from homology"/>